<accession>C4XMR7</accession>
<gene>
    <name evidence="1" type="primary">dtd</name>
    <name type="ordered locus">DMR_13670</name>
</gene>
<evidence type="ECO:0000255" key="1">
    <source>
        <dbReference type="HAMAP-Rule" id="MF_00518"/>
    </source>
</evidence>
<protein>
    <recommendedName>
        <fullName evidence="1">D-aminoacyl-tRNA deacylase</fullName>
        <shortName evidence="1">DTD</shortName>
        <ecNumber evidence="1">3.1.1.96</ecNumber>
    </recommendedName>
    <alternativeName>
        <fullName evidence="1">Gly-tRNA(Ala) deacylase</fullName>
    </alternativeName>
</protein>
<name>DTD_SOLM1</name>
<proteinExistence type="inferred from homology"/>
<keyword id="KW-0963">Cytoplasm</keyword>
<keyword id="KW-0378">Hydrolase</keyword>
<keyword id="KW-0694">RNA-binding</keyword>
<keyword id="KW-0820">tRNA-binding</keyword>
<dbReference type="EC" id="3.1.1.96" evidence="1"/>
<dbReference type="EMBL" id="AP010904">
    <property type="protein sequence ID" value="BAH74858.1"/>
    <property type="molecule type" value="Genomic_DNA"/>
</dbReference>
<dbReference type="RefSeq" id="WP_015860068.1">
    <property type="nucleotide sequence ID" value="NC_012796.1"/>
</dbReference>
<dbReference type="SMR" id="C4XMR7"/>
<dbReference type="STRING" id="573370.DMR_13670"/>
<dbReference type="KEGG" id="dma:DMR_13670"/>
<dbReference type="eggNOG" id="COG1490">
    <property type="taxonomic scope" value="Bacteria"/>
</dbReference>
<dbReference type="HOGENOM" id="CLU_076901_1_0_7"/>
<dbReference type="OrthoDB" id="9801395at2"/>
<dbReference type="Proteomes" id="UP000009071">
    <property type="component" value="Chromosome"/>
</dbReference>
<dbReference type="GO" id="GO:0005737">
    <property type="term" value="C:cytoplasm"/>
    <property type="evidence" value="ECO:0007669"/>
    <property type="project" value="UniProtKB-SubCell"/>
</dbReference>
<dbReference type="GO" id="GO:0051500">
    <property type="term" value="F:D-tyrosyl-tRNA(Tyr) deacylase activity"/>
    <property type="evidence" value="ECO:0007669"/>
    <property type="project" value="TreeGrafter"/>
</dbReference>
<dbReference type="GO" id="GO:0106026">
    <property type="term" value="F:Gly-tRNA(Ala) deacylase activity"/>
    <property type="evidence" value="ECO:0007669"/>
    <property type="project" value="UniProtKB-UniRule"/>
</dbReference>
<dbReference type="GO" id="GO:0043908">
    <property type="term" value="F:Ser(Gly)-tRNA(Ala) hydrolase activity"/>
    <property type="evidence" value="ECO:0007669"/>
    <property type="project" value="UniProtKB-UniRule"/>
</dbReference>
<dbReference type="GO" id="GO:0000049">
    <property type="term" value="F:tRNA binding"/>
    <property type="evidence" value="ECO:0007669"/>
    <property type="project" value="UniProtKB-UniRule"/>
</dbReference>
<dbReference type="GO" id="GO:0019478">
    <property type="term" value="P:D-amino acid catabolic process"/>
    <property type="evidence" value="ECO:0007669"/>
    <property type="project" value="UniProtKB-UniRule"/>
</dbReference>
<dbReference type="FunFam" id="3.50.80.10:FF:000001">
    <property type="entry name" value="D-aminoacyl-tRNA deacylase"/>
    <property type="match status" value="1"/>
</dbReference>
<dbReference type="Gene3D" id="3.50.80.10">
    <property type="entry name" value="D-tyrosyl-tRNA(Tyr) deacylase"/>
    <property type="match status" value="1"/>
</dbReference>
<dbReference type="HAMAP" id="MF_00518">
    <property type="entry name" value="Deacylase_Dtd"/>
    <property type="match status" value="1"/>
</dbReference>
<dbReference type="InterPro" id="IPR003732">
    <property type="entry name" value="Daa-tRNA_deacyls_DTD"/>
</dbReference>
<dbReference type="InterPro" id="IPR023509">
    <property type="entry name" value="DTD-like_sf"/>
</dbReference>
<dbReference type="NCBIfam" id="TIGR00256">
    <property type="entry name" value="D-aminoacyl-tRNA deacylase"/>
    <property type="match status" value="1"/>
</dbReference>
<dbReference type="PANTHER" id="PTHR10472:SF5">
    <property type="entry name" value="D-AMINOACYL-TRNA DEACYLASE 1"/>
    <property type="match status" value="1"/>
</dbReference>
<dbReference type="PANTHER" id="PTHR10472">
    <property type="entry name" value="D-TYROSYL-TRNA TYR DEACYLASE"/>
    <property type="match status" value="1"/>
</dbReference>
<dbReference type="Pfam" id="PF02580">
    <property type="entry name" value="Tyr_Deacylase"/>
    <property type="match status" value="1"/>
</dbReference>
<dbReference type="SUPFAM" id="SSF69500">
    <property type="entry name" value="DTD-like"/>
    <property type="match status" value="1"/>
</dbReference>
<comment type="function">
    <text evidence="1">An aminoacyl-tRNA editing enzyme that deacylates mischarged D-aminoacyl-tRNAs. Also deacylates mischarged glycyl-tRNA(Ala), protecting cells against glycine mischarging by AlaRS. Acts via tRNA-based rather than protein-based catalysis; rejects L-amino acids rather than detecting D-amino acids in the active site. By recycling D-aminoacyl-tRNA to D-amino acids and free tRNA molecules, this enzyme counteracts the toxicity associated with the formation of D-aminoacyl-tRNA entities in vivo and helps enforce protein L-homochirality.</text>
</comment>
<comment type="catalytic activity">
    <reaction evidence="1">
        <text>glycyl-tRNA(Ala) + H2O = tRNA(Ala) + glycine + H(+)</text>
        <dbReference type="Rhea" id="RHEA:53744"/>
        <dbReference type="Rhea" id="RHEA-COMP:9657"/>
        <dbReference type="Rhea" id="RHEA-COMP:13640"/>
        <dbReference type="ChEBI" id="CHEBI:15377"/>
        <dbReference type="ChEBI" id="CHEBI:15378"/>
        <dbReference type="ChEBI" id="CHEBI:57305"/>
        <dbReference type="ChEBI" id="CHEBI:78442"/>
        <dbReference type="ChEBI" id="CHEBI:78522"/>
        <dbReference type="EC" id="3.1.1.96"/>
    </reaction>
</comment>
<comment type="catalytic activity">
    <reaction evidence="1">
        <text>a D-aminoacyl-tRNA + H2O = a tRNA + a D-alpha-amino acid + H(+)</text>
        <dbReference type="Rhea" id="RHEA:13953"/>
        <dbReference type="Rhea" id="RHEA-COMP:10123"/>
        <dbReference type="Rhea" id="RHEA-COMP:10124"/>
        <dbReference type="ChEBI" id="CHEBI:15377"/>
        <dbReference type="ChEBI" id="CHEBI:15378"/>
        <dbReference type="ChEBI" id="CHEBI:59871"/>
        <dbReference type="ChEBI" id="CHEBI:78442"/>
        <dbReference type="ChEBI" id="CHEBI:79333"/>
        <dbReference type="EC" id="3.1.1.96"/>
    </reaction>
</comment>
<comment type="subunit">
    <text evidence="1">Homodimer.</text>
</comment>
<comment type="subcellular location">
    <subcellularLocation>
        <location evidence="1">Cytoplasm</location>
    </subcellularLocation>
</comment>
<comment type="domain">
    <text evidence="1">A Gly-cisPro motif from one monomer fits into the active site of the other monomer to allow specific chiral rejection of L-amino acids.</text>
</comment>
<comment type="similarity">
    <text evidence="1">Belongs to the DTD family.</text>
</comment>
<feature type="chain" id="PRO_1000211725" description="D-aminoacyl-tRNA deacylase">
    <location>
        <begin position="1"/>
        <end position="158"/>
    </location>
</feature>
<feature type="short sequence motif" description="Gly-cisPro motif, important for rejection of L-amino acids" evidence="1">
    <location>
        <begin position="143"/>
        <end position="144"/>
    </location>
</feature>
<organism>
    <name type="scientific">Solidesulfovibrio magneticus (strain ATCC 700980 / DSM 13731 / RS-1)</name>
    <name type="common">Desulfovibrio magneticus</name>
    <dbReference type="NCBI Taxonomy" id="573370"/>
    <lineage>
        <taxon>Bacteria</taxon>
        <taxon>Pseudomonadati</taxon>
        <taxon>Thermodesulfobacteriota</taxon>
        <taxon>Desulfovibrionia</taxon>
        <taxon>Desulfovibrionales</taxon>
        <taxon>Desulfovibrionaceae</taxon>
        <taxon>Solidesulfovibrio</taxon>
    </lineage>
</organism>
<reference key="1">
    <citation type="journal article" date="2009" name="Genome Res.">
        <title>Whole genome sequence of Desulfovibrio magneticus strain RS-1 revealed common gene clusters in magnetotactic bacteria.</title>
        <authorList>
            <person name="Nakazawa H."/>
            <person name="Arakaki A."/>
            <person name="Narita-Yamada S."/>
            <person name="Yashiro I."/>
            <person name="Jinno K."/>
            <person name="Aoki N."/>
            <person name="Tsuruyama A."/>
            <person name="Okamura Y."/>
            <person name="Tanikawa S."/>
            <person name="Fujita N."/>
            <person name="Takeyama H."/>
            <person name="Matsunaga T."/>
        </authorList>
    </citation>
    <scope>NUCLEOTIDE SEQUENCE [LARGE SCALE GENOMIC DNA]</scope>
    <source>
        <strain>ATCC 700980 / DSM 13731 / RS-1</strain>
    </source>
</reference>
<sequence length="158" mass="16316">MRLVVQRVREASVAVDGQAVASIEAGLLVLVGFGAADGSDFAAGKPCRATLEKLLDLRIFPDEAGKLNLSLRETGGGLLLVSQFTLYASCRKGRRPSFSEAAPPQVALGLYNALVEMAGQALPGRVGSGVFGADMDVSLVNWGPVTILLDSADLGGAT</sequence>